<protein>
    <recommendedName>
        <fullName evidence="1">Large ribosomal subunit protein bL31B</fullName>
    </recommendedName>
    <alternativeName>
        <fullName evidence="2">50S ribosomal protein L31 type B</fullName>
    </alternativeName>
</protein>
<feature type="chain" id="PRO_1000014720" description="Large ribosomal subunit protein bL31B">
    <location>
        <begin position="1"/>
        <end position="80"/>
    </location>
</feature>
<dbReference type="EMBL" id="CP000387">
    <property type="protein sequence ID" value="ABN44674.1"/>
    <property type="molecule type" value="Genomic_DNA"/>
</dbReference>
<dbReference type="RefSeq" id="WP_002895374.1">
    <property type="nucleotide sequence ID" value="NZ_CAXTYR010000001.1"/>
</dbReference>
<dbReference type="RefSeq" id="YP_001035224.1">
    <property type="nucleotide sequence ID" value="NC_009009.1"/>
</dbReference>
<dbReference type="SMR" id="A3CNB9"/>
<dbReference type="STRING" id="388919.SSA_1272"/>
<dbReference type="KEGG" id="ssa:SSA_1272"/>
<dbReference type="PATRIC" id="fig|388919.9.peg.1211"/>
<dbReference type="eggNOG" id="COG0254">
    <property type="taxonomic scope" value="Bacteria"/>
</dbReference>
<dbReference type="HOGENOM" id="CLU_114306_2_2_9"/>
<dbReference type="OrthoDB" id="9803251at2"/>
<dbReference type="Proteomes" id="UP000002148">
    <property type="component" value="Chromosome"/>
</dbReference>
<dbReference type="GO" id="GO:1990904">
    <property type="term" value="C:ribonucleoprotein complex"/>
    <property type="evidence" value="ECO:0007669"/>
    <property type="project" value="UniProtKB-KW"/>
</dbReference>
<dbReference type="GO" id="GO:0005840">
    <property type="term" value="C:ribosome"/>
    <property type="evidence" value="ECO:0007669"/>
    <property type="project" value="UniProtKB-KW"/>
</dbReference>
<dbReference type="GO" id="GO:0003735">
    <property type="term" value="F:structural constituent of ribosome"/>
    <property type="evidence" value="ECO:0007669"/>
    <property type="project" value="InterPro"/>
</dbReference>
<dbReference type="GO" id="GO:0006412">
    <property type="term" value="P:translation"/>
    <property type="evidence" value="ECO:0007669"/>
    <property type="project" value="UniProtKB-UniRule"/>
</dbReference>
<dbReference type="Gene3D" id="4.10.830.30">
    <property type="entry name" value="Ribosomal protein L31"/>
    <property type="match status" value="1"/>
</dbReference>
<dbReference type="HAMAP" id="MF_00502">
    <property type="entry name" value="Ribosomal_bL31_2"/>
    <property type="match status" value="1"/>
</dbReference>
<dbReference type="InterPro" id="IPR034704">
    <property type="entry name" value="Ribosomal_bL28/bL31-like_sf"/>
</dbReference>
<dbReference type="InterPro" id="IPR002150">
    <property type="entry name" value="Ribosomal_bL31"/>
</dbReference>
<dbReference type="InterPro" id="IPR027493">
    <property type="entry name" value="Ribosomal_bL31_B"/>
</dbReference>
<dbReference type="InterPro" id="IPR042105">
    <property type="entry name" value="Ribosomal_bL31_sf"/>
</dbReference>
<dbReference type="NCBIfam" id="TIGR00105">
    <property type="entry name" value="L31"/>
    <property type="match status" value="1"/>
</dbReference>
<dbReference type="NCBIfam" id="NF002462">
    <property type="entry name" value="PRK01678.1"/>
    <property type="match status" value="1"/>
</dbReference>
<dbReference type="PANTHER" id="PTHR33280">
    <property type="entry name" value="50S RIBOSOMAL PROTEIN L31, CHLOROPLASTIC"/>
    <property type="match status" value="1"/>
</dbReference>
<dbReference type="PANTHER" id="PTHR33280:SF1">
    <property type="entry name" value="LARGE RIBOSOMAL SUBUNIT PROTEIN BL31C"/>
    <property type="match status" value="1"/>
</dbReference>
<dbReference type="Pfam" id="PF01197">
    <property type="entry name" value="Ribosomal_L31"/>
    <property type="match status" value="1"/>
</dbReference>
<dbReference type="PRINTS" id="PR01249">
    <property type="entry name" value="RIBOSOMALL31"/>
</dbReference>
<dbReference type="SUPFAM" id="SSF143800">
    <property type="entry name" value="L28p-like"/>
    <property type="match status" value="1"/>
</dbReference>
<dbReference type="PROSITE" id="PS01143">
    <property type="entry name" value="RIBOSOMAL_L31"/>
    <property type="match status" value="1"/>
</dbReference>
<accession>A3CNB9</accession>
<name>RL31B_STRSV</name>
<keyword id="KW-1185">Reference proteome</keyword>
<keyword id="KW-0687">Ribonucleoprotein</keyword>
<keyword id="KW-0689">Ribosomal protein</keyword>
<comment type="subunit">
    <text evidence="1">Part of the 50S ribosomal subunit.</text>
</comment>
<comment type="similarity">
    <text evidence="1">Belongs to the bacterial ribosomal protein bL31 family. Type B subfamily.</text>
</comment>
<gene>
    <name evidence="1" type="primary">rpmE2</name>
    <name type="ordered locus">SSA_1272</name>
</gene>
<reference key="1">
    <citation type="journal article" date="2007" name="J. Bacteriol.">
        <title>Genome of the opportunistic pathogen Streptococcus sanguinis.</title>
        <authorList>
            <person name="Xu P."/>
            <person name="Alves J.M."/>
            <person name="Kitten T."/>
            <person name="Brown A."/>
            <person name="Chen Z."/>
            <person name="Ozaki L.S."/>
            <person name="Manque P."/>
            <person name="Ge X."/>
            <person name="Serrano M.G."/>
            <person name="Puiu D."/>
            <person name="Hendricks S."/>
            <person name="Wang Y."/>
            <person name="Chaplin M.D."/>
            <person name="Akan D."/>
            <person name="Paik S."/>
            <person name="Peterson D.L."/>
            <person name="Macrina F.L."/>
            <person name="Buck G.A."/>
        </authorList>
    </citation>
    <scope>NUCLEOTIDE SEQUENCE [LARGE SCALE GENOMIC DNA]</scope>
    <source>
        <strain>SK36</strain>
    </source>
</reference>
<evidence type="ECO:0000255" key="1">
    <source>
        <dbReference type="HAMAP-Rule" id="MF_00502"/>
    </source>
</evidence>
<evidence type="ECO:0000305" key="2"/>
<sequence length="80" mass="9372">MRKDIHPEYRPVVFMDTSTGYQFLSGSTKRSNETVEFEGETYPLIRVEISSDSHPFYTGRQKFTQADGRVDRFNKKYGLK</sequence>
<organism>
    <name type="scientific">Streptococcus sanguinis (strain SK36)</name>
    <dbReference type="NCBI Taxonomy" id="388919"/>
    <lineage>
        <taxon>Bacteria</taxon>
        <taxon>Bacillati</taxon>
        <taxon>Bacillota</taxon>
        <taxon>Bacilli</taxon>
        <taxon>Lactobacillales</taxon>
        <taxon>Streptococcaceae</taxon>
        <taxon>Streptococcus</taxon>
    </lineage>
</organism>
<proteinExistence type="inferred from homology"/>